<protein>
    <recommendedName>
        <fullName>NACHT, LRR and PYD domains-containing protein 12</fullName>
    </recommendedName>
    <alternativeName>
        <fullName>Monarch-1</fullName>
    </alternativeName>
    <alternativeName>
        <fullName>PYRIN-containing APAF1-like protein 7</fullName>
    </alternativeName>
    <alternativeName>
        <fullName>Regulated by nitric oxide</fullName>
    </alternativeName>
</protein>
<comment type="function">
    <text evidence="1 6 8 11 12">Plays an essential role as an potent mitigator of inflammation (PubMed:30559449). Primarily expressed in dendritic cells and macrophages, inhibits both canonical and non-canonical NF-kappa-B and ERK activation pathways (PubMed:15489334, PubMed:17947705). Functions as a negative regulator of NOD2 by targeting it to degradation via the proteasome pathway (PubMed:30559449). In turn, promotes bacterial tolerance (PubMed:30559449). Also inhibits the RIGI-mediated immune signaling against RNA viruses by reducing the E3 ubiquitin ligase TRIM25-mediated 'Lys-63'-linked RIGI activation but enhancing the E3 ubiquitin ligase RNF125-mediated 'Lys-48'-linked RIGI degradation (PubMed:30902577). Also acts as a negative regulator of inflammatory response to mitigate obesity and obesity-associated diseases in adipose tissue (By similarity).</text>
</comment>
<comment type="subunit">
    <text evidence="7 8 10 11 12">Interacts (via pyrin domain) with ASC. Interacts (via pyrin domain) with FAF1 (via UBA domain) (PubMed:21978668). Interacts with MAP3K14; this interaction promotes proteasomal degradation of MAP3K14 (PubMed:17237370). Interacts with NOD2; this interaction promotes degradation of NOD2 through the ubiquitin-proteasome pathway (PubMed:30559449). Interacts with HSPA1A and HSPA8 (PubMed:17947705). Interacts with HSP90AA1 (PubMed:17947705, PubMed:30559449). Interacts with TRIM25; this interaction inhibits RIGI-mediated signaling pathway (PubMed:30902577).</text>
</comment>
<comment type="interaction">
    <interactant intactId="EBI-6374637">
        <id>P59046</id>
    </interactant>
    <interactant intactId="EBI-346340">
        <id>P08631</id>
        <label>HCK</label>
    </interactant>
    <organismsDiffer>false</organismsDiffer>
    <experiments>4</experiments>
</comment>
<comment type="interaction">
    <interactant intactId="EBI-6374637">
        <id>P59046</id>
    </interactant>
    <interactant intactId="EBI-765817">
        <id>Q9Y228</id>
        <label>TRAF3IP3</label>
    </interactant>
    <organismsDiffer>false</organismsDiffer>
    <experiments>2</experiments>
</comment>
<comment type="interaction">
    <interactant intactId="EBI-6374637">
        <id>P59046</id>
    </interactant>
    <interactant intactId="EBI-25475864">
        <id>PRO_0000449623</id>
        <label>rep</label>
        <dbReference type="UniProtKB" id="P0DTD1"/>
    </interactant>
    <organismsDiffer>true</organismsDiffer>
    <experiments>3</experiments>
</comment>
<comment type="subcellular location">
    <subcellularLocation>
        <location evidence="12">Cytoplasm</location>
    </subcellularLocation>
</comment>
<comment type="alternative products">
    <event type="alternative splicing"/>
    <isoform>
        <id>P59046-1</id>
        <name>1</name>
        <name>I</name>
        <sequence type="displayed"/>
    </isoform>
    <isoform>
        <id>P59046-2</id>
        <name>2</name>
        <name>II</name>
        <sequence type="described" ref="VSP_005524"/>
    </isoform>
    <isoform>
        <id>P59046-3</id>
        <name>3</name>
        <name>III</name>
        <sequence type="described" ref="VSP_005523"/>
    </isoform>
    <isoform>
        <id>P59046-4</id>
        <name>4</name>
        <name>IV</name>
        <sequence type="described" ref="VSP_009879"/>
    </isoform>
    <isoform>
        <id>P59046-5</id>
        <name>5</name>
        <name>rno-2</name>
        <sequence type="described" ref="VSP_016908 VSP_016909 VSP_016910"/>
    </isoform>
    <isoform>
        <id>P59046-6</id>
        <name>6</name>
        <sequence type="described" ref="VSP_054622"/>
    </isoform>
    <isoform>
        <id>P59046-7</id>
        <name>7</name>
        <sequence type="described" ref="VSP_055193"/>
    </isoform>
</comment>
<comment type="tissue specificity">
    <text evidence="5">Detected only in peripheral blood leukocytes, predominantly in eosinophils and granulocytes, and at lower levels in monocytes.</text>
</comment>
<comment type="induction">
    <text evidence="5">By nitric oxide and DMSO in HL-60 cells, an acute myeloid leukemia cell line.</text>
</comment>
<comment type="disease" evidence="9">
    <disease id="DI-01562">
        <name>Familial cold autoinflammatory syndrome 2</name>
        <acronym>FCAS2</acronym>
        <description>A rare autosomal dominant systemic inflammatory disease characterized by recurrent episodes of maculopapular rash associated with arthralgias, myalgias, fever and chills, swelling of the extremities, and conjunctivitis after generalized exposure to cold.</description>
        <dbReference type="MIM" id="611762"/>
    </disease>
    <text>The disease is caused by variants affecting the gene represented in this entry.</text>
</comment>
<comment type="similarity">
    <text evidence="16">Belongs to the NLRP family.</text>
</comment>
<gene>
    <name type="primary">NLRP12</name>
    <name type="synonym">NALP12</name>
    <name type="synonym">PYPAF7</name>
    <name type="synonym">RNO</name>
</gene>
<proteinExistence type="evidence at protein level"/>
<reference key="1">
    <citation type="journal article" date="2002" name="J. Biol. Chem.">
        <title>PYPAF7, a novel PYRIN-containing Apaf1-like protein that regulates activation of NF-kappa B and caspase-1-dependent cytokine processing.</title>
        <authorList>
            <person name="Wang L."/>
            <person name="Manji G.A."/>
            <person name="Grenier J.M."/>
            <person name="Al-Garawi A."/>
            <person name="Merriam S."/>
            <person name="Lora J.M."/>
            <person name="Geddes B.J."/>
            <person name="Briskin M."/>
            <person name="DiStefano P.S."/>
            <person name="Bertin J."/>
        </authorList>
    </citation>
    <scope>NUCLEOTIDE SEQUENCE [MRNA] (ISOFORM 1)</scope>
</reference>
<reference key="2">
    <citation type="journal article" date="2003" name="Nat. Rev. Mol. Cell Biol.">
        <title>NALPs: a novel protein family involved in inflammation.</title>
        <authorList>
            <person name="Tschopp J."/>
            <person name="Martinon F."/>
            <person name="Burns K."/>
        </authorList>
    </citation>
    <scope>NUCLEOTIDE SEQUENCE [MRNA] (ISOFORM 1)</scope>
</reference>
<reference key="3">
    <citation type="submission" date="2002-05" db="EMBL/GenBank/DDBJ databases">
        <authorList>
            <person name="Williams K.L."/>
            <person name="Linhoff M.W."/>
            <person name="Harton J.A."/>
            <person name="Ting J.P.Y."/>
        </authorList>
    </citation>
    <scope>NUCLEOTIDE SEQUENCE [MRNA] (ISOFORMS 1; 2; 3; 4 AND 7)</scope>
    <source>
        <tissue>Lymphoma</tissue>
    </source>
</reference>
<reference key="4">
    <citation type="journal article" date="2001" name="Br. J. Haematol.">
        <title>Identification and characterization of a novel gene that is upregulated in leukaemia cells by nitric oxide.</title>
        <authorList>
            <person name="Shami P.J."/>
            <person name="Kanai N."/>
            <person name="Wang L.Y."/>
            <person name="Vreeke T.M."/>
            <person name="Parker C.J."/>
        </authorList>
    </citation>
    <scope>NUCLEOTIDE SEQUENCE [MRNA] (ISOFORM 5)</scope>
    <scope>TISSUE SPECIFICITY</scope>
    <scope>ALTERNATIVE SPLICING</scope>
    <scope>INDUCTION</scope>
    <source>
        <tissue>Peripheral blood leukocyte</tissue>
    </source>
</reference>
<reference key="5">
    <citation type="journal article" date="2004" name="Nat. Genet.">
        <title>Complete sequencing and characterization of 21,243 full-length human cDNAs.</title>
        <authorList>
            <person name="Ota T."/>
            <person name="Suzuki Y."/>
            <person name="Nishikawa T."/>
            <person name="Otsuki T."/>
            <person name="Sugiyama T."/>
            <person name="Irie R."/>
            <person name="Wakamatsu A."/>
            <person name="Hayashi K."/>
            <person name="Sato H."/>
            <person name="Nagai K."/>
            <person name="Kimura K."/>
            <person name="Makita H."/>
            <person name="Sekine M."/>
            <person name="Obayashi M."/>
            <person name="Nishi T."/>
            <person name="Shibahara T."/>
            <person name="Tanaka T."/>
            <person name="Ishii S."/>
            <person name="Yamamoto J."/>
            <person name="Saito K."/>
            <person name="Kawai Y."/>
            <person name="Isono Y."/>
            <person name="Nakamura Y."/>
            <person name="Nagahari K."/>
            <person name="Murakami K."/>
            <person name="Yasuda T."/>
            <person name="Iwayanagi T."/>
            <person name="Wagatsuma M."/>
            <person name="Shiratori A."/>
            <person name="Sudo H."/>
            <person name="Hosoiri T."/>
            <person name="Kaku Y."/>
            <person name="Kodaira H."/>
            <person name="Kondo H."/>
            <person name="Sugawara M."/>
            <person name="Takahashi M."/>
            <person name="Kanda K."/>
            <person name="Yokoi T."/>
            <person name="Furuya T."/>
            <person name="Kikkawa E."/>
            <person name="Omura Y."/>
            <person name="Abe K."/>
            <person name="Kamihara K."/>
            <person name="Katsuta N."/>
            <person name="Sato K."/>
            <person name="Tanikawa M."/>
            <person name="Yamazaki M."/>
            <person name="Ninomiya K."/>
            <person name="Ishibashi T."/>
            <person name="Yamashita H."/>
            <person name="Murakawa K."/>
            <person name="Fujimori K."/>
            <person name="Tanai H."/>
            <person name="Kimata M."/>
            <person name="Watanabe M."/>
            <person name="Hiraoka S."/>
            <person name="Chiba Y."/>
            <person name="Ishida S."/>
            <person name="Ono Y."/>
            <person name="Takiguchi S."/>
            <person name="Watanabe S."/>
            <person name="Yosida M."/>
            <person name="Hotuta T."/>
            <person name="Kusano J."/>
            <person name="Kanehori K."/>
            <person name="Takahashi-Fujii A."/>
            <person name="Hara H."/>
            <person name="Tanase T.-O."/>
            <person name="Nomura Y."/>
            <person name="Togiya S."/>
            <person name="Komai F."/>
            <person name="Hara R."/>
            <person name="Takeuchi K."/>
            <person name="Arita M."/>
            <person name="Imose N."/>
            <person name="Musashino K."/>
            <person name="Yuuki H."/>
            <person name="Oshima A."/>
            <person name="Sasaki N."/>
            <person name="Aotsuka S."/>
            <person name="Yoshikawa Y."/>
            <person name="Matsunawa H."/>
            <person name="Ichihara T."/>
            <person name="Shiohata N."/>
            <person name="Sano S."/>
            <person name="Moriya S."/>
            <person name="Momiyama H."/>
            <person name="Satoh N."/>
            <person name="Takami S."/>
            <person name="Terashima Y."/>
            <person name="Suzuki O."/>
            <person name="Nakagawa S."/>
            <person name="Senoh A."/>
            <person name="Mizoguchi H."/>
            <person name="Goto Y."/>
            <person name="Shimizu F."/>
            <person name="Wakebe H."/>
            <person name="Hishigaki H."/>
            <person name="Watanabe T."/>
            <person name="Sugiyama A."/>
            <person name="Takemoto M."/>
            <person name="Kawakami B."/>
            <person name="Yamazaki M."/>
            <person name="Watanabe K."/>
            <person name="Kumagai A."/>
            <person name="Itakura S."/>
            <person name="Fukuzumi Y."/>
            <person name="Fujimori Y."/>
            <person name="Komiyama M."/>
            <person name="Tashiro H."/>
            <person name="Tanigami A."/>
            <person name="Fujiwara T."/>
            <person name="Ono T."/>
            <person name="Yamada K."/>
            <person name="Fujii Y."/>
            <person name="Ozaki K."/>
            <person name="Hirao M."/>
            <person name="Ohmori Y."/>
            <person name="Kawabata A."/>
            <person name="Hikiji T."/>
            <person name="Kobatake N."/>
            <person name="Inagaki H."/>
            <person name="Ikema Y."/>
            <person name="Okamoto S."/>
            <person name="Okitani R."/>
            <person name="Kawakami T."/>
            <person name="Noguchi S."/>
            <person name="Itoh T."/>
            <person name="Shigeta K."/>
            <person name="Senba T."/>
            <person name="Matsumura K."/>
            <person name="Nakajima Y."/>
            <person name="Mizuno T."/>
            <person name="Morinaga M."/>
            <person name="Sasaki M."/>
            <person name="Togashi T."/>
            <person name="Oyama M."/>
            <person name="Hata H."/>
            <person name="Watanabe M."/>
            <person name="Komatsu T."/>
            <person name="Mizushima-Sugano J."/>
            <person name="Satoh T."/>
            <person name="Shirai Y."/>
            <person name="Takahashi Y."/>
            <person name="Nakagawa K."/>
            <person name="Okumura K."/>
            <person name="Nagase T."/>
            <person name="Nomura N."/>
            <person name="Kikuchi H."/>
            <person name="Masuho Y."/>
            <person name="Yamashita R."/>
            <person name="Nakai K."/>
            <person name="Yada T."/>
            <person name="Nakamura Y."/>
            <person name="Ohara O."/>
            <person name="Isogai T."/>
            <person name="Sugano S."/>
        </authorList>
    </citation>
    <scope>NUCLEOTIDE SEQUENCE [LARGE SCALE MRNA] (ISOFORM 6)</scope>
</reference>
<reference key="6">
    <citation type="journal article" date="2004" name="Nature">
        <title>The DNA sequence and biology of human chromosome 19.</title>
        <authorList>
            <person name="Grimwood J."/>
            <person name="Gordon L.A."/>
            <person name="Olsen A.S."/>
            <person name="Terry A."/>
            <person name="Schmutz J."/>
            <person name="Lamerdin J.E."/>
            <person name="Hellsten U."/>
            <person name="Goodstein D."/>
            <person name="Couronne O."/>
            <person name="Tran-Gyamfi M."/>
            <person name="Aerts A."/>
            <person name="Altherr M."/>
            <person name="Ashworth L."/>
            <person name="Bajorek E."/>
            <person name="Black S."/>
            <person name="Branscomb E."/>
            <person name="Caenepeel S."/>
            <person name="Carrano A.V."/>
            <person name="Caoile C."/>
            <person name="Chan Y.M."/>
            <person name="Christensen M."/>
            <person name="Cleland C.A."/>
            <person name="Copeland A."/>
            <person name="Dalin E."/>
            <person name="Dehal P."/>
            <person name="Denys M."/>
            <person name="Detter J.C."/>
            <person name="Escobar J."/>
            <person name="Flowers D."/>
            <person name="Fotopulos D."/>
            <person name="Garcia C."/>
            <person name="Georgescu A.M."/>
            <person name="Glavina T."/>
            <person name="Gomez M."/>
            <person name="Gonzales E."/>
            <person name="Groza M."/>
            <person name="Hammon N."/>
            <person name="Hawkins T."/>
            <person name="Haydu L."/>
            <person name="Ho I."/>
            <person name="Huang W."/>
            <person name="Israni S."/>
            <person name="Jett J."/>
            <person name="Kadner K."/>
            <person name="Kimball H."/>
            <person name="Kobayashi A."/>
            <person name="Larionov V."/>
            <person name="Leem S.-H."/>
            <person name="Lopez F."/>
            <person name="Lou Y."/>
            <person name="Lowry S."/>
            <person name="Malfatti S."/>
            <person name="Martinez D."/>
            <person name="McCready P.M."/>
            <person name="Medina C."/>
            <person name="Morgan J."/>
            <person name="Nelson K."/>
            <person name="Nolan M."/>
            <person name="Ovcharenko I."/>
            <person name="Pitluck S."/>
            <person name="Pollard M."/>
            <person name="Popkie A.P."/>
            <person name="Predki P."/>
            <person name="Quan G."/>
            <person name="Ramirez L."/>
            <person name="Rash S."/>
            <person name="Retterer J."/>
            <person name="Rodriguez A."/>
            <person name="Rogers S."/>
            <person name="Salamov A."/>
            <person name="Salazar A."/>
            <person name="She X."/>
            <person name="Smith D."/>
            <person name="Slezak T."/>
            <person name="Solovyev V."/>
            <person name="Thayer N."/>
            <person name="Tice H."/>
            <person name="Tsai M."/>
            <person name="Ustaszewska A."/>
            <person name="Vo N."/>
            <person name="Wagner M."/>
            <person name="Wheeler J."/>
            <person name="Wu K."/>
            <person name="Xie G."/>
            <person name="Yang J."/>
            <person name="Dubchak I."/>
            <person name="Furey T.S."/>
            <person name="DeJong P."/>
            <person name="Dickson M."/>
            <person name="Gordon D."/>
            <person name="Eichler E.E."/>
            <person name="Pennacchio L.A."/>
            <person name="Richardson P."/>
            <person name="Stubbs L."/>
            <person name="Rokhsar D.S."/>
            <person name="Myers R.M."/>
            <person name="Rubin E.M."/>
            <person name="Lucas S.M."/>
        </authorList>
    </citation>
    <scope>NUCLEOTIDE SEQUENCE [LARGE SCALE GENOMIC DNA]</scope>
</reference>
<reference key="7">
    <citation type="submission" date="2005-07" db="EMBL/GenBank/DDBJ databases">
        <authorList>
            <person name="Mural R.J."/>
            <person name="Istrail S."/>
            <person name="Sutton G."/>
            <person name="Florea L."/>
            <person name="Halpern A.L."/>
            <person name="Mobarry C.M."/>
            <person name="Lippert R."/>
            <person name="Walenz B."/>
            <person name="Shatkay H."/>
            <person name="Dew I."/>
            <person name="Miller J.R."/>
            <person name="Flanigan M.J."/>
            <person name="Edwards N.J."/>
            <person name="Bolanos R."/>
            <person name="Fasulo D."/>
            <person name="Halldorsson B.V."/>
            <person name="Hannenhalli S."/>
            <person name="Turner R."/>
            <person name="Yooseph S."/>
            <person name="Lu F."/>
            <person name="Nusskern D.R."/>
            <person name="Shue B.C."/>
            <person name="Zheng X.H."/>
            <person name="Zhong F."/>
            <person name="Delcher A.L."/>
            <person name="Huson D.H."/>
            <person name="Kravitz S.A."/>
            <person name="Mouchard L."/>
            <person name="Reinert K."/>
            <person name="Remington K.A."/>
            <person name="Clark A.G."/>
            <person name="Waterman M.S."/>
            <person name="Eichler E.E."/>
            <person name="Adams M.D."/>
            <person name="Hunkapiller M.W."/>
            <person name="Myers E.W."/>
            <person name="Venter J.C."/>
        </authorList>
    </citation>
    <scope>NUCLEOTIDE SEQUENCE [LARGE SCALE GENOMIC DNA]</scope>
</reference>
<reference key="8">
    <citation type="journal article" date="2004" name="Genome Res.">
        <title>The status, quality, and expansion of the NIH full-length cDNA project: the Mammalian Gene Collection (MGC).</title>
        <authorList>
            <consortium name="The MGC Project Team"/>
        </authorList>
    </citation>
    <scope>NUCLEOTIDE SEQUENCE [LARGE SCALE MRNA] (ISOFORM 1)</scope>
    <source>
        <tissue>Leukocyte</tissue>
    </source>
</reference>
<reference key="9">
    <citation type="journal article" date="2007" name="J. Immunol.">
        <title>Monarch-1 suppresses non-canonical NF-kappaB activation and p52-dependent chemokine expression in monocytes.</title>
        <authorList>
            <person name="Lich J.D."/>
            <person name="Williams K.L."/>
            <person name="Moore C.B."/>
            <person name="Arthur J.C."/>
            <person name="Davis B.K."/>
            <person name="Taxman D.J."/>
            <person name="Ting J.P."/>
        </authorList>
    </citation>
    <scope>FUNCTION</scope>
    <scope>INTERACTION WITH MAP3K14</scope>
</reference>
<reference key="10">
    <citation type="journal article" date="2007" name="J. Immunol.">
        <title>Heat shock protein 90 associates with monarch-1 and regulates its ability to promote degradation of NF-kappaB-inducing kinase.</title>
        <authorList>
            <person name="Arthur J.C."/>
            <person name="Lich J.D."/>
            <person name="Aziz R.K."/>
            <person name="Kotb M."/>
            <person name="Ting J.P."/>
        </authorList>
    </citation>
    <scope>FUNCTION</scope>
    <scope>INTERACTION WITH HSPA8; HSPA1A AND HSP90AA1</scope>
</reference>
<reference key="11">
    <citation type="journal article" date="2008" name="Mol. Cell. Biol.">
        <title>ATP binding by monarch-1/NLRP12 is critical for its inhibitory function.</title>
        <authorList>
            <person name="Ye Z."/>
            <person name="Lich J.D."/>
            <person name="Moore C.B."/>
            <person name="Duncan J.A."/>
            <person name="Williams K.L."/>
            <person name="Ting J.P."/>
        </authorList>
    </citation>
    <scope>ATP-BINDING</scope>
</reference>
<reference key="12">
    <citation type="journal article" date="2008" name="Proc. Natl. Acad. Sci. U.S.A.">
        <title>Mutations in NALP12 cause hereditary periodic fever syndromes.</title>
        <authorList>
            <person name="Jeru I."/>
            <person name="Duquesnoy P."/>
            <person name="Fernandes-Alnemri T."/>
            <person name="Cochet E."/>
            <person name="Yu J.W."/>
            <person name="Lackmy-Port-Lis M."/>
            <person name="Grimprel E."/>
            <person name="Landman-Parker J."/>
            <person name="Hentgen V."/>
            <person name="Marlin S."/>
            <person name="McElreavey K."/>
            <person name="Sarkisian T."/>
            <person name="Grateau G."/>
            <person name="Alnemri E.S."/>
            <person name="Amselem S."/>
        </authorList>
    </citation>
    <scope>INVOLVEMENT IN FCAS2</scope>
</reference>
<reference key="13">
    <citation type="journal article" date="2018" name="Nat. Commun.">
        <title>Proteasomal degradation of NOD2 by NLRP12 in monocytes promotes bacterial tolerance and colonization by enteropathogens.</title>
        <authorList>
            <person name="Normand S."/>
            <person name="Waldschmitt N."/>
            <person name="Neerincx A."/>
            <person name="Martinez-Torres R.J."/>
            <person name="Chauvin C."/>
            <person name="Couturier-Maillard A."/>
            <person name="Boulard O."/>
            <person name="Cobret L."/>
            <person name="Awad F."/>
            <person name="Huot L."/>
            <person name="Ribeiro-Ribeiro A."/>
            <person name="Lautz K."/>
            <person name="Ruez R."/>
            <person name="Delacre M."/>
            <person name="Bondu C."/>
            <person name="Guilliams M."/>
            <person name="Scott C."/>
            <person name="Segal A."/>
            <person name="Amselem S."/>
            <person name="Hot D."/>
            <person name="Karabina S."/>
            <person name="Bohn E."/>
            <person name="Ryffel B."/>
            <person name="Poulin L.F."/>
            <person name="Kufer T.A."/>
            <person name="Chamaillard M."/>
        </authorList>
    </citation>
    <scope>FUNCTION</scope>
    <scope>INTERACTION WITH NOD2 AND HSP90AA1</scope>
</reference>
<reference key="14">
    <citation type="journal article" date="2019" name="Cell Host Microbe">
        <title>NLRP12 Regulates Anti-viral RIG-I Activation via Interaction with TRIM25.</title>
        <authorList>
            <person name="Chen S.T."/>
            <person name="Chen L."/>
            <person name="Lin D.S."/>
            <person name="Chen S.Y."/>
            <person name="Tsao Y.P."/>
            <person name="Guo H."/>
            <person name="Li F.J."/>
            <person name="Tseng W.T."/>
            <person name="Tam J.W."/>
            <person name="Chao C.W."/>
            <person name="Brickey W.J."/>
            <person name="Dzhagalov I."/>
            <person name="Song M.J."/>
            <person name="Kang H.R."/>
            <person name="Jung J.U."/>
            <person name="Ting J.P."/>
        </authorList>
    </citation>
    <scope>FUNCTION</scope>
    <scope>INTERACTION WITH TRIM25</scope>
    <scope>SUBCELLULAR LOCATION</scope>
</reference>
<reference key="15">
    <citation type="journal article" date="2011" name="J. Mol. Biol.">
        <title>The NLRP12 pyrin domain: structure, dynamics, and functional insights.</title>
        <authorList>
            <person name="Pinheiro A.S."/>
            <person name="Eibl C."/>
            <person name="Ekman-Vural Z."/>
            <person name="Schwarzenbacher R."/>
            <person name="Peti W."/>
        </authorList>
    </citation>
    <scope>STRUCTURE BY NMR OF 1-98</scope>
    <scope>INTERACTION WITH FAF1</scope>
</reference>
<reference key="16">
    <citation type="journal article" date="2017" name="Sci. Rep.">
        <title>Design of an expression system to enhance MBP-mediated crystallization.</title>
        <authorList>
            <person name="Jin T."/>
            <person name="Chuenchor W."/>
            <person name="Jiang J."/>
            <person name="Cheng J."/>
            <person name="Li Y."/>
            <person name="Fang K."/>
            <person name="Huang M."/>
            <person name="Smith P."/>
            <person name="Xiao T.S."/>
        </authorList>
    </citation>
    <scope>X-RAY CRYSTALLOGRAPHY (1.85 ANGSTROMS) OF 9-106</scope>
</reference>
<keyword id="KW-0002">3D-structure</keyword>
<keyword id="KW-0025">Alternative splicing</keyword>
<keyword id="KW-0067">ATP-binding</keyword>
<keyword id="KW-0963">Cytoplasm</keyword>
<keyword id="KW-0433">Leucine-rich repeat</keyword>
<keyword id="KW-0547">Nucleotide-binding</keyword>
<keyword id="KW-1267">Proteomics identification</keyword>
<keyword id="KW-1185">Reference proteome</keyword>
<keyword id="KW-0677">Repeat</keyword>
<organism>
    <name type="scientific">Homo sapiens</name>
    <name type="common">Human</name>
    <dbReference type="NCBI Taxonomy" id="9606"/>
    <lineage>
        <taxon>Eukaryota</taxon>
        <taxon>Metazoa</taxon>
        <taxon>Chordata</taxon>
        <taxon>Craniata</taxon>
        <taxon>Vertebrata</taxon>
        <taxon>Euteleostomi</taxon>
        <taxon>Mammalia</taxon>
        <taxon>Eutheria</taxon>
        <taxon>Euarchontoglires</taxon>
        <taxon>Primates</taxon>
        <taxon>Haplorrhini</taxon>
        <taxon>Catarrhini</taxon>
        <taxon>Hominidae</taxon>
        <taxon>Homo</taxon>
    </lineage>
</organism>
<accession>P59046</accession>
<accession>A8MTQ2</accession>
<accession>B3KTE7</accession>
<accession>Q8NEU4</accession>
<accession>Q9BY26</accession>
<feature type="chain" id="PRO_0000080899" description="NACHT, LRR and PYD domains-containing protein 12">
    <location>
        <begin position="1"/>
        <end position="1061"/>
    </location>
</feature>
<feature type="domain" description="Pyrin" evidence="3">
    <location>
        <begin position="1"/>
        <end position="95"/>
    </location>
</feature>
<feature type="domain" description="FISNA" evidence="2">
    <location>
        <begin position="129"/>
        <end position="201"/>
    </location>
</feature>
<feature type="domain" description="NACHT" evidence="4">
    <location>
        <begin position="211"/>
        <end position="528"/>
    </location>
</feature>
<feature type="repeat" description="LRR 1">
    <location>
        <begin position="828"/>
        <end position="848"/>
    </location>
</feature>
<feature type="repeat" description="LRR 2">
    <location>
        <begin position="857"/>
        <end position="878"/>
    </location>
</feature>
<feature type="repeat" description="LRR 3">
    <location>
        <begin position="885"/>
        <end position="906"/>
    </location>
</feature>
<feature type="repeat" description="LRR 4">
    <location>
        <begin position="914"/>
        <end position="935"/>
    </location>
</feature>
<feature type="repeat" description="LRR 5">
    <location>
        <begin position="942"/>
        <end position="962"/>
    </location>
</feature>
<feature type="repeat" description="LRR 6">
    <location>
        <begin position="971"/>
        <end position="992"/>
    </location>
</feature>
<feature type="repeat" description="LRR 7">
    <location>
        <begin position="999"/>
        <end position="1020"/>
    </location>
</feature>
<feature type="repeat" description="LRR 8">
    <location>
        <begin position="1028"/>
        <end position="1049"/>
    </location>
</feature>
<feature type="binding site">
    <location>
        <begin position="217"/>
        <end position="224"/>
    </location>
    <ligand>
        <name>ATP</name>
        <dbReference type="ChEBI" id="CHEBI:30616"/>
    </ligand>
</feature>
<feature type="splice variant" id="VSP_016908" description="In isoform 5." evidence="13">
    <location>
        <begin position="1"/>
        <end position="717"/>
    </location>
</feature>
<feature type="splice variant" id="VSP_055193" description="In isoform 7." evidence="15">
    <original>L</original>
    <variation>LR</variation>
    <location>
        <position position="691"/>
    </location>
</feature>
<feature type="splice variant" id="VSP_016909" description="In isoform 5." evidence="13">
    <original>LSLYRNALGSRGVKLLCQGLRHPNCKLQNLR</original>
    <variation>MSQAWWHTSVSPATQEAKAGGLLQPRRQRLW</variation>
    <location>
        <begin position="718"/>
        <end position="748"/>
    </location>
</feature>
<feature type="splice variant" id="VSP_009879" description="In isoform 4." evidence="15">
    <location>
        <begin position="862"/>
        <end position="1031"/>
    </location>
</feature>
<feature type="splice variant" id="VSP_005523" description="In isoform 3." evidence="15">
    <location>
        <begin position="862"/>
        <end position="973"/>
    </location>
</feature>
<feature type="splice variant" id="VSP_054622" description="In isoform 6." evidence="14">
    <location>
        <begin position="920"/>
        <end position="976"/>
    </location>
</feature>
<feature type="splice variant" id="VSP_016910" description="In isoform 5." evidence="13">
    <location>
        <begin position="921"/>
        <end position="977"/>
    </location>
</feature>
<feature type="splice variant" id="VSP_005524" description="In isoform 2." evidence="15">
    <location>
        <begin position="976"/>
        <end position="1031"/>
    </location>
</feature>
<feature type="sequence variant" id="VAR_053620" description="In dbSNP:rs34436714.">
    <original>G</original>
    <variation>V</variation>
    <location>
        <position position="39"/>
    </location>
</feature>
<feature type="sequence variant" id="VAR_053621" description="In dbSNP:rs34971363.">
    <original>F</original>
    <variation>L</variation>
    <location>
        <position position="402"/>
    </location>
</feature>
<feature type="sequence conflict" description="In Ref. 5; BAG53059." evidence="16" ref="5">
    <original>M</original>
    <variation>T</variation>
    <location>
        <position position="648"/>
    </location>
</feature>
<feature type="helix" evidence="18">
    <location>
        <begin position="9"/>
        <end position="18"/>
    </location>
</feature>
<feature type="helix" evidence="18">
    <location>
        <begin position="22"/>
        <end position="32"/>
    </location>
</feature>
<feature type="turn" evidence="17">
    <location>
        <begin position="37"/>
        <end position="40"/>
    </location>
</feature>
<feature type="helix" evidence="18">
    <location>
        <begin position="45"/>
        <end position="49"/>
    </location>
</feature>
<feature type="helix" evidence="18">
    <location>
        <begin position="53"/>
        <end position="64"/>
    </location>
</feature>
<feature type="helix" evidence="18">
    <location>
        <begin position="66"/>
        <end position="79"/>
    </location>
</feature>
<feature type="helix" evidence="18">
    <location>
        <begin position="83"/>
        <end position="92"/>
    </location>
</feature>
<feature type="strand" evidence="17">
    <location>
        <begin position="95"/>
        <end position="98"/>
    </location>
</feature>
<evidence type="ECO:0000250" key="1">
    <source>
        <dbReference type="UniProtKB" id="E9Q5R7"/>
    </source>
</evidence>
<evidence type="ECO:0000255" key="2"/>
<evidence type="ECO:0000255" key="3">
    <source>
        <dbReference type="PROSITE-ProRule" id="PRU00061"/>
    </source>
</evidence>
<evidence type="ECO:0000255" key="4">
    <source>
        <dbReference type="PROSITE-ProRule" id="PRU00136"/>
    </source>
</evidence>
<evidence type="ECO:0000269" key="5">
    <source>
    </source>
</evidence>
<evidence type="ECO:0000269" key="6">
    <source>
    </source>
</evidence>
<evidence type="ECO:0000269" key="7">
    <source>
    </source>
</evidence>
<evidence type="ECO:0000269" key="8">
    <source>
    </source>
</evidence>
<evidence type="ECO:0000269" key="9">
    <source>
    </source>
</evidence>
<evidence type="ECO:0000269" key="10">
    <source>
    </source>
</evidence>
<evidence type="ECO:0000269" key="11">
    <source>
    </source>
</evidence>
<evidence type="ECO:0000269" key="12">
    <source>
    </source>
</evidence>
<evidence type="ECO:0000303" key="13">
    <source>
    </source>
</evidence>
<evidence type="ECO:0000303" key="14">
    <source>
    </source>
</evidence>
<evidence type="ECO:0000303" key="15">
    <source ref="3"/>
</evidence>
<evidence type="ECO:0000305" key="16"/>
<evidence type="ECO:0007829" key="17">
    <source>
        <dbReference type="PDB" id="2L6A"/>
    </source>
</evidence>
<evidence type="ECO:0007829" key="18">
    <source>
        <dbReference type="PDB" id="5H7N"/>
    </source>
</evidence>
<name>NAL12_HUMAN</name>
<dbReference type="EMBL" id="AY095146">
    <property type="protein sequence ID" value="AAM18227.1"/>
    <property type="molecule type" value="mRNA"/>
</dbReference>
<dbReference type="EMBL" id="AY154467">
    <property type="protein sequence ID" value="AAO18163.1"/>
    <property type="molecule type" value="mRNA"/>
</dbReference>
<dbReference type="EMBL" id="AY116204">
    <property type="protein sequence ID" value="AAM75142.1"/>
    <property type="molecule type" value="mRNA"/>
</dbReference>
<dbReference type="EMBL" id="AY116205">
    <property type="protein sequence ID" value="AAM75143.1"/>
    <property type="molecule type" value="mRNA"/>
</dbReference>
<dbReference type="EMBL" id="AY116206">
    <property type="protein sequence ID" value="AAM75144.1"/>
    <property type="molecule type" value="mRNA"/>
</dbReference>
<dbReference type="EMBL" id="AY116207">
    <property type="protein sequence ID" value="AAM75145.1"/>
    <property type="molecule type" value="mRNA"/>
</dbReference>
<dbReference type="EMBL" id="AF231021">
    <property type="protein sequence ID" value="AAK14942.1"/>
    <property type="molecule type" value="mRNA"/>
</dbReference>
<dbReference type="EMBL" id="AK095460">
    <property type="protein sequence ID" value="BAG53059.1"/>
    <property type="molecule type" value="mRNA"/>
</dbReference>
<dbReference type="EMBL" id="AC008753">
    <property type="status" value="NOT_ANNOTATED_CDS"/>
    <property type="molecule type" value="Genomic_DNA"/>
</dbReference>
<dbReference type="EMBL" id="CH471135">
    <property type="protein sequence ID" value="EAW72152.1"/>
    <property type="molecule type" value="Genomic_DNA"/>
</dbReference>
<dbReference type="EMBL" id="BC028069">
    <property type="protein sequence ID" value="AAH28069.1"/>
    <property type="molecule type" value="mRNA"/>
</dbReference>
<dbReference type="CCDS" id="CCDS12864.1">
    <molecule id="P59046-1"/>
</dbReference>
<dbReference type="CCDS" id="CCDS62784.1">
    <molecule id="P59046-6"/>
</dbReference>
<dbReference type="CCDS" id="CCDS62785.1">
    <molecule id="P59046-7"/>
</dbReference>
<dbReference type="RefSeq" id="NP_001264055.1">
    <molecule id="P59046-7"/>
    <property type="nucleotide sequence ID" value="NM_001277126.2"/>
</dbReference>
<dbReference type="RefSeq" id="NP_001264058.1">
    <molecule id="P59046-6"/>
    <property type="nucleotide sequence ID" value="NM_001277129.1"/>
</dbReference>
<dbReference type="RefSeq" id="NP_653288.1">
    <molecule id="P59046-1"/>
    <property type="nucleotide sequence ID" value="NM_144687.4"/>
</dbReference>
<dbReference type="PDB" id="2L6A">
    <property type="method" value="NMR"/>
    <property type="chains" value="A=1-98"/>
</dbReference>
<dbReference type="PDB" id="4XHS">
    <property type="method" value="X-ray"/>
    <property type="resolution" value="1.70 A"/>
    <property type="chains" value="A/B=10-106"/>
</dbReference>
<dbReference type="PDB" id="5H7N">
    <property type="method" value="X-ray"/>
    <property type="resolution" value="1.85 A"/>
    <property type="chains" value="A/B=9-106"/>
</dbReference>
<dbReference type="PDBsum" id="2L6A"/>
<dbReference type="PDBsum" id="4XHS"/>
<dbReference type="PDBsum" id="5H7N"/>
<dbReference type="BMRB" id="P59046"/>
<dbReference type="SMR" id="P59046"/>
<dbReference type="BioGRID" id="124861">
    <property type="interactions" value="12"/>
</dbReference>
<dbReference type="CORUM" id="P59046"/>
<dbReference type="FunCoup" id="P59046">
    <property type="interactions" value="754"/>
</dbReference>
<dbReference type="IntAct" id="P59046">
    <property type="interactions" value="76"/>
</dbReference>
<dbReference type="MINT" id="P59046"/>
<dbReference type="STRING" id="9606.ENSP00000375653"/>
<dbReference type="GlyGen" id="P59046">
    <property type="glycosylation" value="1 site, 1 O-linked glycan (1 site)"/>
</dbReference>
<dbReference type="iPTMnet" id="P59046"/>
<dbReference type="PhosphoSitePlus" id="P59046"/>
<dbReference type="BioMuta" id="NLRP12"/>
<dbReference type="DMDM" id="34223733"/>
<dbReference type="MassIVE" id="P59046"/>
<dbReference type="PaxDb" id="9606-ENSP00000375653"/>
<dbReference type="PeptideAtlas" id="P59046"/>
<dbReference type="ProteomicsDB" id="2044"/>
<dbReference type="ProteomicsDB" id="57117">
    <molecule id="P59046-1"/>
</dbReference>
<dbReference type="ProteomicsDB" id="57118">
    <molecule id="P59046-2"/>
</dbReference>
<dbReference type="ProteomicsDB" id="57119">
    <molecule id="P59046-3"/>
</dbReference>
<dbReference type="ProteomicsDB" id="57120">
    <molecule id="P59046-4"/>
</dbReference>
<dbReference type="ProteomicsDB" id="57121">
    <molecule id="P59046-5"/>
</dbReference>
<dbReference type="Antibodypedia" id="32741">
    <property type="antibodies" value="320 antibodies from 34 providers"/>
</dbReference>
<dbReference type="DNASU" id="91662"/>
<dbReference type="Ensembl" id="ENST00000324134.11">
    <molecule id="P59046-1"/>
    <property type="protein sequence ID" value="ENSP00000319377.6"/>
    <property type="gene ID" value="ENSG00000142405.24"/>
</dbReference>
<dbReference type="Ensembl" id="ENST00000391773.8">
    <molecule id="P59046-7"/>
    <property type="protein sequence ID" value="ENSP00000375653.1"/>
    <property type="gene ID" value="ENSG00000142405.24"/>
</dbReference>
<dbReference type="Ensembl" id="ENST00000391775.7">
    <molecule id="P59046-6"/>
    <property type="protein sequence ID" value="ENSP00000375655.3"/>
    <property type="gene ID" value="ENSG00000142405.24"/>
</dbReference>
<dbReference type="GeneID" id="91662"/>
<dbReference type="KEGG" id="hsa:91662"/>
<dbReference type="MANE-Select" id="ENST00000324134.11">
    <property type="protein sequence ID" value="ENSP00000319377.6"/>
    <property type="RefSeq nucleotide sequence ID" value="NM_144687.4"/>
    <property type="RefSeq protein sequence ID" value="NP_653288.1"/>
</dbReference>
<dbReference type="UCSC" id="uc002qch.6">
    <molecule id="P59046-1"/>
    <property type="organism name" value="human"/>
</dbReference>
<dbReference type="AGR" id="HGNC:22938"/>
<dbReference type="CTD" id="91662"/>
<dbReference type="DisGeNET" id="91662"/>
<dbReference type="GeneCards" id="NLRP12"/>
<dbReference type="HGNC" id="HGNC:22938">
    <property type="gene designation" value="NLRP12"/>
</dbReference>
<dbReference type="HPA" id="ENSG00000142405">
    <property type="expression patterns" value="Group enriched (bone marrow, lymphoid tissue)"/>
</dbReference>
<dbReference type="MalaCards" id="NLRP12"/>
<dbReference type="MIM" id="609648">
    <property type="type" value="gene"/>
</dbReference>
<dbReference type="MIM" id="611762">
    <property type="type" value="phenotype"/>
</dbReference>
<dbReference type="neXtProt" id="NX_P59046"/>
<dbReference type="OpenTargets" id="ENSG00000142405"/>
<dbReference type="Orphanet" id="247868">
    <property type="disease" value="NLRP12-associated hereditary periodic fever syndrome"/>
</dbReference>
<dbReference type="PharmGKB" id="PA162397866"/>
<dbReference type="VEuPathDB" id="HostDB:ENSG00000142405"/>
<dbReference type="eggNOG" id="ENOG502QS9E">
    <property type="taxonomic scope" value="Eukaryota"/>
</dbReference>
<dbReference type="GeneTree" id="ENSGT00940000160873"/>
<dbReference type="InParanoid" id="P59046"/>
<dbReference type="OMA" id="TTAVYMF"/>
<dbReference type="OrthoDB" id="120976at2759"/>
<dbReference type="PAN-GO" id="P59046">
    <property type="GO annotations" value="6 GO annotations based on evolutionary models"/>
</dbReference>
<dbReference type="PhylomeDB" id="P59046"/>
<dbReference type="TreeFam" id="TF340267"/>
<dbReference type="PathwayCommons" id="P59046"/>
<dbReference type="Reactome" id="R-HSA-9705671">
    <property type="pathway name" value="SARS-CoV-2 activates/modulates innate and adaptive immune responses"/>
</dbReference>
<dbReference type="SignaLink" id="P59046"/>
<dbReference type="BioGRID-ORCS" id="91662">
    <property type="hits" value="17 hits in 1143 CRISPR screens"/>
</dbReference>
<dbReference type="ChiTaRS" id="NLRP12">
    <property type="organism name" value="human"/>
</dbReference>
<dbReference type="EvolutionaryTrace" id="P59046"/>
<dbReference type="GeneWiki" id="NLRP12"/>
<dbReference type="GenomeRNAi" id="91662"/>
<dbReference type="Pharos" id="P59046">
    <property type="development level" value="Tbio"/>
</dbReference>
<dbReference type="PRO" id="PR:P59046"/>
<dbReference type="Proteomes" id="UP000005640">
    <property type="component" value="Chromosome 19"/>
</dbReference>
<dbReference type="RNAct" id="P59046">
    <property type="molecule type" value="protein"/>
</dbReference>
<dbReference type="Bgee" id="ENSG00000142405">
    <property type="expression patterns" value="Expressed in blood and 87 other cell types or tissues"/>
</dbReference>
<dbReference type="ExpressionAtlas" id="P59046">
    <property type="expression patterns" value="baseline and differential"/>
</dbReference>
<dbReference type="GO" id="GO:0005737">
    <property type="term" value="C:cytoplasm"/>
    <property type="evidence" value="ECO:0000314"/>
    <property type="project" value="UniProtKB"/>
</dbReference>
<dbReference type="GO" id="GO:0005829">
    <property type="term" value="C:cytosol"/>
    <property type="evidence" value="ECO:0000304"/>
    <property type="project" value="Reactome"/>
</dbReference>
<dbReference type="GO" id="GO:0005524">
    <property type="term" value="F:ATP binding"/>
    <property type="evidence" value="ECO:0007669"/>
    <property type="project" value="UniProtKB-KW"/>
</dbReference>
<dbReference type="GO" id="GO:0140608">
    <property type="term" value="F:cysteine-type endopeptidase activator activity"/>
    <property type="evidence" value="ECO:0000303"/>
    <property type="project" value="UniProtKB"/>
</dbReference>
<dbReference type="GO" id="GO:0030674">
    <property type="term" value="F:protein-macromolecule adaptor activity"/>
    <property type="evidence" value="ECO:0007669"/>
    <property type="project" value="Ensembl"/>
</dbReference>
<dbReference type="GO" id="GO:0071345">
    <property type="term" value="P:cellular response to cytokine stimulus"/>
    <property type="evidence" value="ECO:0007669"/>
    <property type="project" value="Ensembl"/>
</dbReference>
<dbReference type="GO" id="GO:0036336">
    <property type="term" value="P:dendritic cell migration"/>
    <property type="evidence" value="ECO:0007669"/>
    <property type="project" value="Ensembl"/>
</dbReference>
<dbReference type="GO" id="GO:0070371">
    <property type="term" value="P:ERK1 and ERK2 cascade"/>
    <property type="evidence" value="ECO:0007669"/>
    <property type="project" value="Ensembl"/>
</dbReference>
<dbReference type="GO" id="GO:0043124">
    <property type="term" value="P:negative regulation of canonical NF-kappaB signal transduction"/>
    <property type="evidence" value="ECO:0000314"/>
    <property type="project" value="HGNC-UCL"/>
</dbReference>
<dbReference type="GO" id="GO:0001818">
    <property type="term" value="P:negative regulation of cytokine production"/>
    <property type="evidence" value="ECO:0000314"/>
    <property type="project" value="HGNC-UCL"/>
</dbReference>
<dbReference type="GO" id="GO:0070373">
    <property type="term" value="P:negative regulation of ERK1 and ERK2 cascade"/>
    <property type="evidence" value="ECO:0007669"/>
    <property type="project" value="Ensembl"/>
</dbReference>
<dbReference type="GO" id="GO:0050728">
    <property type="term" value="P:negative regulation of inflammatory response"/>
    <property type="evidence" value="ECO:0000315"/>
    <property type="project" value="BHF-UCL"/>
</dbReference>
<dbReference type="GO" id="GO:0032692">
    <property type="term" value="P:negative regulation of interleukin-1 production"/>
    <property type="evidence" value="ECO:0000314"/>
    <property type="project" value="HGNC-UCL"/>
</dbReference>
<dbReference type="GO" id="GO:0032715">
    <property type="term" value="P:negative regulation of interleukin-6 production"/>
    <property type="evidence" value="ECO:0000314"/>
    <property type="project" value="HGNC-UCL"/>
</dbReference>
<dbReference type="GO" id="GO:1901223">
    <property type="term" value="P:negative regulation of non-canonical NF-kappaB signal transduction"/>
    <property type="evidence" value="ECO:0000314"/>
    <property type="project" value="UniProtKB"/>
</dbReference>
<dbReference type="GO" id="GO:0009968">
    <property type="term" value="P:negative regulation of signal transduction"/>
    <property type="evidence" value="ECO:0000314"/>
    <property type="project" value="HGNC-UCL"/>
</dbReference>
<dbReference type="GO" id="GO:0045751">
    <property type="term" value="P:negative regulation of Toll signaling pathway"/>
    <property type="evidence" value="ECO:0000314"/>
    <property type="project" value="HGNC-UCL"/>
</dbReference>
<dbReference type="GO" id="GO:0050729">
    <property type="term" value="P:positive regulation of inflammatory response"/>
    <property type="evidence" value="ECO:0000303"/>
    <property type="project" value="UniProtKB"/>
</dbReference>
<dbReference type="GO" id="GO:0032731">
    <property type="term" value="P:positive regulation of interleukin-1 beta production"/>
    <property type="evidence" value="ECO:0000303"/>
    <property type="project" value="UniProtKB"/>
</dbReference>
<dbReference type="GO" id="GO:0045345">
    <property type="term" value="P:positive regulation of MHC class I biosynthetic process"/>
    <property type="evidence" value="ECO:0000314"/>
    <property type="project" value="MGI"/>
</dbReference>
<dbReference type="GO" id="GO:1901224">
    <property type="term" value="P:positive regulation of non-canonical NF-kappaB signal transduction"/>
    <property type="evidence" value="ECO:0000314"/>
    <property type="project" value="UniProtKB"/>
</dbReference>
<dbReference type="GO" id="GO:0043122">
    <property type="term" value="P:regulation of canonical NF-kappaB signal transduction"/>
    <property type="evidence" value="ECO:0000314"/>
    <property type="project" value="MGI"/>
</dbReference>
<dbReference type="GO" id="GO:0050727">
    <property type="term" value="P:regulation of inflammatory response"/>
    <property type="evidence" value="ECO:0000318"/>
    <property type="project" value="GO_Central"/>
</dbReference>
<dbReference type="GO" id="GO:0032661">
    <property type="term" value="P:regulation of interleukin-18 production"/>
    <property type="evidence" value="ECO:0000303"/>
    <property type="project" value="UniProtKB"/>
</dbReference>
<dbReference type="GO" id="GO:0007165">
    <property type="term" value="P:signal transduction"/>
    <property type="evidence" value="ECO:0000303"/>
    <property type="project" value="UniProtKB"/>
</dbReference>
<dbReference type="CDD" id="cd00116">
    <property type="entry name" value="LRR_RI"/>
    <property type="match status" value="1"/>
</dbReference>
<dbReference type="CDD" id="cd08320">
    <property type="entry name" value="Pyrin_NALPs"/>
    <property type="match status" value="1"/>
</dbReference>
<dbReference type="FunFam" id="3.80.10.10:FF:000707">
    <property type="entry name" value="NACHT, LRR and PYD domains-containing protein 12"/>
    <property type="match status" value="1"/>
</dbReference>
<dbReference type="FunFam" id="1.10.533.10:FF:000064">
    <property type="entry name" value="NLR family pyrin domain containing 12"/>
    <property type="match status" value="1"/>
</dbReference>
<dbReference type="FunFam" id="3.80.10.10:FF:000615">
    <property type="entry name" value="NLR family pyrin domain containing 12"/>
    <property type="match status" value="1"/>
</dbReference>
<dbReference type="Gene3D" id="1.10.533.10">
    <property type="entry name" value="Death Domain, Fas"/>
    <property type="match status" value="1"/>
</dbReference>
<dbReference type="Gene3D" id="3.40.50.300">
    <property type="entry name" value="P-loop containing nucleotide triphosphate hydrolases"/>
    <property type="match status" value="1"/>
</dbReference>
<dbReference type="Gene3D" id="3.80.10.10">
    <property type="entry name" value="Ribonuclease Inhibitor"/>
    <property type="match status" value="2"/>
</dbReference>
<dbReference type="InterPro" id="IPR004020">
    <property type="entry name" value="DAPIN"/>
</dbReference>
<dbReference type="InterPro" id="IPR011029">
    <property type="entry name" value="DEATH-like_dom_sf"/>
</dbReference>
<dbReference type="InterPro" id="IPR001611">
    <property type="entry name" value="Leu-rich_rpt"/>
</dbReference>
<dbReference type="InterPro" id="IPR032675">
    <property type="entry name" value="LRR_dom_sf"/>
</dbReference>
<dbReference type="InterPro" id="IPR029495">
    <property type="entry name" value="NACHT-assoc"/>
</dbReference>
<dbReference type="InterPro" id="IPR007111">
    <property type="entry name" value="NACHT_NTPase"/>
</dbReference>
<dbReference type="InterPro" id="IPR041267">
    <property type="entry name" value="NLRP_HD2"/>
</dbReference>
<dbReference type="InterPro" id="IPR050637">
    <property type="entry name" value="NLRP_innate_immun_reg"/>
</dbReference>
<dbReference type="InterPro" id="IPR041075">
    <property type="entry name" value="NOD1/2_WH"/>
</dbReference>
<dbReference type="InterPro" id="IPR027417">
    <property type="entry name" value="P-loop_NTPase"/>
</dbReference>
<dbReference type="PANTHER" id="PTHR45690">
    <property type="entry name" value="NACHT, LRR AND PYD DOMAINS-CONTAINING PROTEIN 12"/>
    <property type="match status" value="1"/>
</dbReference>
<dbReference type="PANTHER" id="PTHR45690:SF11">
    <property type="entry name" value="NACHT, LRR AND PYD DOMAINS-CONTAINING PROTEIN 12"/>
    <property type="match status" value="1"/>
</dbReference>
<dbReference type="Pfam" id="PF14484">
    <property type="entry name" value="FISNA"/>
    <property type="match status" value="1"/>
</dbReference>
<dbReference type="Pfam" id="PF13516">
    <property type="entry name" value="LRR_6"/>
    <property type="match status" value="5"/>
</dbReference>
<dbReference type="Pfam" id="PF05729">
    <property type="entry name" value="NACHT"/>
    <property type="match status" value="1"/>
</dbReference>
<dbReference type="Pfam" id="PF17776">
    <property type="entry name" value="NLRC4_HD2"/>
    <property type="match status" value="1"/>
</dbReference>
<dbReference type="Pfam" id="PF17779">
    <property type="entry name" value="NOD2_WH"/>
    <property type="match status" value="1"/>
</dbReference>
<dbReference type="Pfam" id="PF02758">
    <property type="entry name" value="PYRIN"/>
    <property type="match status" value="1"/>
</dbReference>
<dbReference type="SMART" id="SM01288">
    <property type="entry name" value="FISNA"/>
    <property type="match status" value="1"/>
</dbReference>
<dbReference type="SMART" id="SM00368">
    <property type="entry name" value="LRR_RI"/>
    <property type="match status" value="11"/>
</dbReference>
<dbReference type="SMART" id="SM01289">
    <property type="entry name" value="PYRIN"/>
    <property type="match status" value="1"/>
</dbReference>
<dbReference type="SUPFAM" id="SSF47986">
    <property type="entry name" value="DEATH domain"/>
    <property type="match status" value="1"/>
</dbReference>
<dbReference type="SUPFAM" id="SSF52540">
    <property type="entry name" value="P-loop containing nucleoside triphosphate hydrolases"/>
    <property type="match status" value="1"/>
</dbReference>
<dbReference type="SUPFAM" id="SSF52047">
    <property type="entry name" value="RNI-like"/>
    <property type="match status" value="1"/>
</dbReference>
<dbReference type="PROSITE" id="PS50824">
    <property type="entry name" value="DAPIN"/>
    <property type="match status" value="1"/>
</dbReference>
<dbReference type="PROSITE" id="PS51450">
    <property type="entry name" value="LRR"/>
    <property type="match status" value="5"/>
</dbReference>
<dbReference type="PROSITE" id="PS50837">
    <property type="entry name" value="NACHT"/>
    <property type="match status" value="1"/>
</dbReference>
<sequence length="1061" mass="120173">MLRTAGRDGLCRLSTYLEELEAVELKKFKLYLGTATELGEGKIPWGSMEKAGPLEMAQLLITHFGPEEAWRLALSTFERINRKDLWERGQREDLVRDTPPGGPSSLGNQSTCLLEVSLVTPRKDPQETYRDYVRRKFRLMEDRNARLGECVNLSHRYTRLLLVKEHSNPMQVQQQLLDTGRGHARTVGHQASPIKIETLFEPDEERPEPPRTVVMQGAAGIGKSMLAHKVMLDWADGKLFQGRFDYLFYINCREMNQSATECSMQDLIFSCWPEPSAPLQELIRVPERLLFIIDGFDELKPSFHDPQGPWCLCWEEKRPTELLLNSLIRKKLLPELSLLITTRPTALEKLHRLLEHPRHVEILGFSEAERKEYFYKYFHNAEQAGQVFNYVRDNEPLFTMCFVPLVCWVVCTCLQQQLEGGGLLRQTSRTTTAVYMLYLLSLMQPKPGAPRLQPPPNQRGLCSLAADGLWNQKILFEEQDLRKHGLDGEDVSAFLNMNIFQKDINCERYYSFIHLSFQEFFAAMYYILDEGEGGAGPDQDVTRLLTEYAFSERSFLALTSRFLFGLLNEETRSHLEKSLCWKVSPHIKMDLLQWIQSKAQSDGSTLQQGSLEFFSCLYEIQEEEFIQQALSHFQVIVVSNIASKMEHMVSSFCLKRCRSAQVLHLYGATYSADGEDRARCSAGAHTLLVQLPERTVLLDAYSEHLAAALCTNPNLIELSLYRNALGSRGVKLLCQGLRHPNCKLQNLRLKRCRISSSACEDLSAALIANKNLTRMDLSGNGVGFPGMMLLCEGLRHPQCRLQMIQLRKCQLESGACQEMASVLGTNPHLVELDLTGNALEDLGLRLLCQGLRHPVCRLRTLWLKICRLTAAACDELASTLSVNQSLRELDLSLNELGDLGVLLLCEGLRHPTCKLQTLRLGICRLGSAACEGLSVVLQANHNLRELDLSFNDLGDWGLWLLAEGLQHPACRLQKLWLDSCGLTAKACENLYFTLGINQTLTDLYLTNNALGDTGVRLLCKRLSHPGCKLRVLWLFGMDLNKMTHSRLAALRVTKPYLDIGC</sequence>